<keyword id="KW-1185">Reference proteome</keyword>
<keyword id="KW-0687">Ribonucleoprotein</keyword>
<keyword id="KW-0689">Ribosomal protein</keyword>
<sequence>MKAGIHPDYRTVVFHDTSADVYYRTGSTIKTDRTIELEGTHYPYVIIEVSSASHPYYTGKQKEYSKEGSTARFHQRFGNFFK</sequence>
<name>RL31B_PECAS</name>
<comment type="subunit">
    <text evidence="1">Part of the 50S ribosomal subunit.</text>
</comment>
<comment type="similarity">
    <text evidence="1">Belongs to the bacterial ribosomal protein bL31 family. Type B subfamily.</text>
</comment>
<feature type="chain" id="PRO_0000173227" description="Large ribosomal subunit protein bL31B">
    <location>
        <begin position="1"/>
        <end position="82"/>
    </location>
</feature>
<organism>
    <name type="scientific">Pectobacterium atrosepticum (strain SCRI 1043 / ATCC BAA-672)</name>
    <name type="common">Erwinia carotovora subsp. atroseptica</name>
    <dbReference type="NCBI Taxonomy" id="218491"/>
    <lineage>
        <taxon>Bacteria</taxon>
        <taxon>Pseudomonadati</taxon>
        <taxon>Pseudomonadota</taxon>
        <taxon>Gammaproteobacteria</taxon>
        <taxon>Enterobacterales</taxon>
        <taxon>Pectobacteriaceae</taxon>
        <taxon>Pectobacterium</taxon>
    </lineage>
</organism>
<reference key="1">
    <citation type="journal article" date="2004" name="Proc. Natl. Acad. Sci. U.S.A.">
        <title>Genome sequence of the enterobacterial phytopathogen Erwinia carotovora subsp. atroseptica and characterization of virulence factors.</title>
        <authorList>
            <person name="Bell K.S."/>
            <person name="Sebaihia M."/>
            <person name="Pritchard L."/>
            <person name="Holden M.T.G."/>
            <person name="Hyman L.J."/>
            <person name="Holeva M.C."/>
            <person name="Thomson N.R."/>
            <person name="Bentley S.D."/>
            <person name="Churcher L.J.C."/>
            <person name="Mungall K."/>
            <person name="Atkin R."/>
            <person name="Bason N."/>
            <person name="Brooks K."/>
            <person name="Chillingworth T."/>
            <person name="Clark K."/>
            <person name="Doggett J."/>
            <person name="Fraser A."/>
            <person name="Hance Z."/>
            <person name="Hauser H."/>
            <person name="Jagels K."/>
            <person name="Moule S."/>
            <person name="Norbertczak H."/>
            <person name="Ormond D."/>
            <person name="Price C."/>
            <person name="Quail M.A."/>
            <person name="Sanders M."/>
            <person name="Walker D."/>
            <person name="Whitehead S."/>
            <person name="Salmond G.P.C."/>
            <person name="Birch P.R.J."/>
            <person name="Parkhill J."/>
            <person name="Toth I.K."/>
        </authorList>
    </citation>
    <scope>NUCLEOTIDE SEQUENCE [LARGE SCALE GENOMIC DNA]</scope>
    <source>
        <strain>SCRI 1043 / ATCC BAA-672</strain>
    </source>
</reference>
<protein>
    <recommendedName>
        <fullName evidence="1">Large ribosomal subunit protein bL31B</fullName>
    </recommendedName>
    <alternativeName>
        <fullName evidence="2">50S ribosomal protein L31 type B</fullName>
    </alternativeName>
</protein>
<proteinExistence type="inferred from homology"/>
<accession>Q6D807</accession>
<evidence type="ECO:0000255" key="1">
    <source>
        <dbReference type="HAMAP-Rule" id="MF_00502"/>
    </source>
</evidence>
<evidence type="ECO:0000305" key="2"/>
<dbReference type="EMBL" id="BX950851">
    <property type="protein sequence ID" value="CAG74078.1"/>
    <property type="molecule type" value="Genomic_DNA"/>
</dbReference>
<dbReference type="RefSeq" id="WP_011092759.1">
    <property type="nucleotide sequence ID" value="NC_004547.2"/>
</dbReference>
<dbReference type="SMR" id="Q6D807"/>
<dbReference type="STRING" id="218491.ECA1168"/>
<dbReference type="KEGG" id="eca:ECA1168"/>
<dbReference type="PATRIC" id="fig|218491.5.peg.1183"/>
<dbReference type="eggNOG" id="COG0254">
    <property type="taxonomic scope" value="Bacteria"/>
</dbReference>
<dbReference type="HOGENOM" id="CLU_114306_2_1_6"/>
<dbReference type="OrthoDB" id="9803251at2"/>
<dbReference type="Proteomes" id="UP000007966">
    <property type="component" value="Chromosome"/>
</dbReference>
<dbReference type="GO" id="GO:1990904">
    <property type="term" value="C:ribonucleoprotein complex"/>
    <property type="evidence" value="ECO:0007669"/>
    <property type="project" value="UniProtKB-KW"/>
</dbReference>
<dbReference type="GO" id="GO:0005840">
    <property type="term" value="C:ribosome"/>
    <property type="evidence" value="ECO:0007669"/>
    <property type="project" value="UniProtKB-KW"/>
</dbReference>
<dbReference type="GO" id="GO:0003735">
    <property type="term" value="F:structural constituent of ribosome"/>
    <property type="evidence" value="ECO:0007669"/>
    <property type="project" value="InterPro"/>
</dbReference>
<dbReference type="GO" id="GO:0006412">
    <property type="term" value="P:translation"/>
    <property type="evidence" value="ECO:0007669"/>
    <property type="project" value="UniProtKB-UniRule"/>
</dbReference>
<dbReference type="Gene3D" id="4.10.830.30">
    <property type="entry name" value="Ribosomal protein L31"/>
    <property type="match status" value="1"/>
</dbReference>
<dbReference type="HAMAP" id="MF_00502">
    <property type="entry name" value="Ribosomal_bL31_2"/>
    <property type="match status" value="1"/>
</dbReference>
<dbReference type="InterPro" id="IPR034704">
    <property type="entry name" value="Ribosomal_bL28/bL31-like_sf"/>
</dbReference>
<dbReference type="InterPro" id="IPR002150">
    <property type="entry name" value="Ribosomal_bL31"/>
</dbReference>
<dbReference type="InterPro" id="IPR027493">
    <property type="entry name" value="Ribosomal_bL31_B"/>
</dbReference>
<dbReference type="InterPro" id="IPR042105">
    <property type="entry name" value="Ribosomal_bL31_sf"/>
</dbReference>
<dbReference type="NCBIfam" id="TIGR00105">
    <property type="entry name" value="L31"/>
    <property type="match status" value="1"/>
</dbReference>
<dbReference type="NCBIfam" id="NF002462">
    <property type="entry name" value="PRK01678.1"/>
    <property type="match status" value="1"/>
</dbReference>
<dbReference type="PANTHER" id="PTHR33280">
    <property type="entry name" value="50S RIBOSOMAL PROTEIN L31, CHLOROPLASTIC"/>
    <property type="match status" value="1"/>
</dbReference>
<dbReference type="PANTHER" id="PTHR33280:SF1">
    <property type="entry name" value="LARGE RIBOSOMAL SUBUNIT PROTEIN BL31C"/>
    <property type="match status" value="1"/>
</dbReference>
<dbReference type="Pfam" id="PF01197">
    <property type="entry name" value="Ribosomal_L31"/>
    <property type="match status" value="1"/>
</dbReference>
<dbReference type="PRINTS" id="PR01249">
    <property type="entry name" value="RIBOSOMALL31"/>
</dbReference>
<dbReference type="SUPFAM" id="SSF143800">
    <property type="entry name" value="L28p-like"/>
    <property type="match status" value="1"/>
</dbReference>
<gene>
    <name evidence="1" type="primary">rpmE2</name>
    <name type="ordered locus">ECA1168</name>
</gene>